<organism>
    <name type="scientific">Methylibium petroleiphilum (strain ATCC BAA-1232 / LMG 22953 / PM1)</name>
    <dbReference type="NCBI Taxonomy" id="420662"/>
    <lineage>
        <taxon>Bacteria</taxon>
        <taxon>Pseudomonadati</taxon>
        <taxon>Pseudomonadota</taxon>
        <taxon>Betaproteobacteria</taxon>
        <taxon>Burkholderiales</taxon>
        <taxon>Sphaerotilaceae</taxon>
        <taxon>Methylibium</taxon>
    </lineage>
</organism>
<proteinExistence type="inferred from homology"/>
<comment type="function">
    <text evidence="1">The RuvA-RuvB-RuvC complex processes Holliday junction (HJ) DNA during genetic recombination and DNA repair, while the RuvA-RuvB complex plays an important role in the rescue of blocked DNA replication forks via replication fork reversal (RFR). RuvA specifically binds to HJ cruciform DNA, conferring on it an open structure. The RuvB hexamer acts as an ATP-dependent pump, pulling dsDNA into and through the RuvAB complex. HJ branch migration allows RuvC to scan DNA until it finds its consensus sequence, where it cleaves and resolves the cruciform DNA.</text>
</comment>
<comment type="subunit">
    <text evidence="1">Homotetramer. Forms an RuvA(8)-RuvB(12)-Holliday junction (HJ) complex. HJ DNA is sandwiched between 2 RuvA tetramers; dsDNA enters through RuvA and exits via RuvB. An RuvB hexamer assembles on each DNA strand where it exits the tetramer. Each RuvB hexamer is contacted by two RuvA subunits (via domain III) on 2 adjacent RuvB subunits; this complex drives branch migration. In the full resolvosome a probable DNA-RuvA(4)-RuvB(12)-RuvC(2) complex forms which resolves the HJ.</text>
</comment>
<comment type="subcellular location">
    <subcellularLocation>
        <location evidence="1">Cytoplasm</location>
    </subcellularLocation>
</comment>
<comment type="domain">
    <text evidence="1">Has three domains with a flexible linker between the domains II and III and assumes an 'L' shape. Domain III is highly mobile and contacts RuvB.</text>
</comment>
<comment type="similarity">
    <text evidence="1">Belongs to the RuvA family.</text>
</comment>
<reference key="1">
    <citation type="journal article" date="2007" name="J. Bacteriol.">
        <title>Whole-genome analysis of the methyl tert-butyl ether-degrading beta-proteobacterium Methylibium petroleiphilum PM1.</title>
        <authorList>
            <person name="Kane S.R."/>
            <person name="Chakicherla A.Y."/>
            <person name="Chain P.S.G."/>
            <person name="Schmidt R."/>
            <person name="Shin M.W."/>
            <person name="Legler T.C."/>
            <person name="Scow K.M."/>
            <person name="Larimer F.W."/>
            <person name="Lucas S.M."/>
            <person name="Richardson P.M."/>
            <person name="Hristova K.R."/>
        </authorList>
    </citation>
    <scope>NUCLEOTIDE SEQUENCE [LARGE SCALE GENOMIC DNA]</scope>
    <source>
        <strain>ATCC BAA-1232 / LMG 22953 / PM1</strain>
    </source>
</reference>
<keyword id="KW-0963">Cytoplasm</keyword>
<keyword id="KW-0227">DNA damage</keyword>
<keyword id="KW-0233">DNA recombination</keyword>
<keyword id="KW-0234">DNA repair</keyword>
<keyword id="KW-0238">DNA-binding</keyword>
<keyword id="KW-1185">Reference proteome</keyword>
<gene>
    <name evidence="1" type="primary">ruvA</name>
    <name type="ordered locus">Mpe_A3236</name>
</gene>
<dbReference type="EMBL" id="CP000555">
    <property type="protein sequence ID" value="ABM96189.1"/>
    <property type="molecule type" value="Genomic_DNA"/>
</dbReference>
<dbReference type="RefSeq" id="WP_011830812.1">
    <property type="nucleotide sequence ID" value="NC_008825.1"/>
</dbReference>
<dbReference type="SMR" id="A2SKV0"/>
<dbReference type="STRING" id="420662.Mpe_A3236"/>
<dbReference type="KEGG" id="mpt:Mpe_A3236"/>
<dbReference type="eggNOG" id="COG0632">
    <property type="taxonomic scope" value="Bacteria"/>
</dbReference>
<dbReference type="HOGENOM" id="CLU_087936_0_0_4"/>
<dbReference type="Proteomes" id="UP000000366">
    <property type="component" value="Chromosome"/>
</dbReference>
<dbReference type="GO" id="GO:0005737">
    <property type="term" value="C:cytoplasm"/>
    <property type="evidence" value="ECO:0007669"/>
    <property type="project" value="UniProtKB-SubCell"/>
</dbReference>
<dbReference type="GO" id="GO:0009379">
    <property type="term" value="C:Holliday junction helicase complex"/>
    <property type="evidence" value="ECO:0007669"/>
    <property type="project" value="InterPro"/>
</dbReference>
<dbReference type="GO" id="GO:0048476">
    <property type="term" value="C:Holliday junction resolvase complex"/>
    <property type="evidence" value="ECO:0007669"/>
    <property type="project" value="UniProtKB-UniRule"/>
</dbReference>
<dbReference type="GO" id="GO:0005524">
    <property type="term" value="F:ATP binding"/>
    <property type="evidence" value="ECO:0007669"/>
    <property type="project" value="InterPro"/>
</dbReference>
<dbReference type="GO" id="GO:0000400">
    <property type="term" value="F:four-way junction DNA binding"/>
    <property type="evidence" value="ECO:0007669"/>
    <property type="project" value="UniProtKB-UniRule"/>
</dbReference>
<dbReference type="GO" id="GO:0009378">
    <property type="term" value="F:four-way junction helicase activity"/>
    <property type="evidence" value="ECO:0007669"/>
    <property type="project" value="InterPro"/>
</dbReference>
<dbReference type="GO" id="GO:0006310">
    <property type="term" value="P:DNA recombination"/>
    <property type="evidence" value="ECO:0007669"/>
    <property type="project" value="UniProtKB-UniRule"/>
</dbReference>
<dbReference type="GO" id="GO:0006281">
    <property type="term" value="P:DNA repair"/>
    <property type="evidence" value="ECO:0007669"/>
    <property type="project" value="UniProtKB-UniRule"/>
</dbReference>
<dbReference type="CDD" id="cd14332">
    <property type="entry name" value="UBA_RuvA_C"/>
    <property type="match status" value="1"/>
</dbReference>
<dbReference type="Gene3D" id="1.10.150.20">
    <property type="entry name" value="5' to 3' exonuclease, C-terminal subdomain"/>
    <property type="match status" value="1"/>
</dbReference>
<dbReference type="Gene3D" id="1.10.8.10">
    <property type="entry name" value="DNA helicase RuvA subunit, C-terminal domain"/>
    <property type="match status" value="1"/>
</dbReference>
<dbReference type="Gene3D" id="2.40.50.140">
    <property type="entry name" value="Nucleic acid-binding proteins"/>
    <property type="match status" value="1"/>
</dbReference>
<dbReference type="HAMAP" id="MF_00031">
    <property type="entry name" value="DNA_HJ_migration_RuvA"/>
    <property type="match status" value="1"/>
</dbReference>
<dbReference type="InterPro" id="IPR013849">
    <property type="entry name" value="DNA_helicase_Holl-junc_RuvA_I"/>
</dbReference>
<dbReference type="InterPro" id="IPR003583">
    <property type="entry name" value="Hlx-hairpin-Hlx_DNA-bd_motif"/>
</dbReference>
<dbReference type="InterPro" id="IPR012340">
    <property type="entry name" value="NA-bd_OB-fold"/>
</dbReference>
<dbReference type="InterPro" id="IPR000085">
    <property type="entry name" value="RuvA"/>
</dbReference>
<dbReference type="InterPro" id="IPR010994">
    <property type="entry name" value="RuvA_2-like"/>
</dbReference>
<dbReference type="InterPro" id="IPR011114">
    <property type="entry name" value="RuvA_C"/>
</dbReference>
<dbReference type="InterPro" id="IPR036267">
    <property type="entry name" value="RuvA_C_sf"/>
</dbReference>
<dbReference type="NCBIfam" id="TIGR00084">
    <property type="entry name" value="ruvA"/>
    <property type="match status" value="1"/>
</dbReference>
<dbReference type="Pfam" id="PF14520">
    <property type="entry name" value="HHH_5"/>
    <property type="match status" value="1"/>
</dbReference>
<dbReference type="Pfam" id="PF07499">
    <property type="entry name" value="RuvA_C"/>
    <property type="match status" value="1"/>
</dbReference>
<dbReference type="Pfam" id="PF01330">
    <property type="entry name" value="RuvA_N"/>
    <property type="match status" value="1"/>
</dbReference>
<dbReference type="SMART" id="SM00278">
    <property type="entry name" value="HhH1"/>
    <property type="match status" value="2"/>
</dbReference>
<dbReference type="SUPFAM" id="SSF46929">
    <property type="entry name" value="DNA helicase RuvA subunit, C-terminal domain"/>
    <property type="match status" value="1"/>
</dbReference>
<dbReference type="SUPFAM" id="SSF50249">
    <property type="entry name" value="Nucleic acid-binding proteins"/>
    <property type="match status" value="1"/>
</dbReference>
<dbReference type="SUPFAM" id="SSF47781">
    <property type="entry name" value="RuvA domain 2-like"/>
    <property type="match status" value="1"/>
</dbReference>
<protein>
    <recommendedName>
        <fullName evidence="1">Holliday junction branch migration complex subunit RuvA</fullName>
    </recommendedName>
</protein>
<accession>A2SKV0</accession>
<name>RUVA_METPP</name>
<sequence>MLGRLTGLLAEKSPPQVLIDVGGVGYEVDVPMSSFFNLPAIGEKVTLLTHFVVREDAQVLFGFLTAPERETFRMLIKISGVGPRTALSILSGLTVGDLAQAVTAQDASRLVKVPGIGKKTAERLLLELKGKLGADLGPAIGGKPASDAQADILQALIALGYSEREAQAAVKALPAEVGVSDGIKLALKALAR</sequence>
<feature type="chain" id="PRO_1000002485" description="Holliday junction branch migration complex subunit RuvA">
    <location>
        <begin position="1"/>
        <end position="192"/>
    </location>
</feature>
<feature type="region of interest" description="Domain I" evidence="1">
    <location>
        <begin position="1"/>
        <end position="64"/>
    </location>
</feature>
<feature type="region of interest" description="Domain II" evidence="1">
    <location>
        <begin position="65"/>
        <end position="139"/>
    </location>
</feature>
<feature type="region of interest" description="Flexible linker" evidence="1">
    <location>
        <begin position="139"/>
        <end position="143"/>
    </location>
</feature>
<feature type="region of interest" description="Domain III" evidence="1">
    <location>
        <begin position="144"/>
        <end position="192"/>
    </location>
</feature>
<evidence type="ECO:0000255" key="1">
    <source>
        <dbReference type="HAMAP-Rule" id="MF_00031"/>
    </source>
</evidence>